<protein>
    <recommendedName>
        <fullName evidence="1">Large ribosomal subunit protein bL19</fullName>
    </recommendedName>
    <alternativeName>
        <fullName evidence="2">50S ribosomal protein L19</fullName>
    </alternativeName>
</protein>
<reference key="1">
    <citation type="journal article" date="2007" name="J. Bacteriol.">
        <title>Genome sequence of Avery's virulent serotype 2 strain D39 of Streptococcus pneumoniae and comparison with that of unencapsulated laboratory strain R6.</title>
        <authorList>
            <person name="Lanie J.A."/>
            <person name="Ng W.-L."/>
            <person name="Kazmierczak K.M."/>
            <person name="Andrzejewski T.M."/>
            <person name="Davidsen T.M."/>
            <person name="Wayne K.J."/>
            <person name="Tettelin H."/>
            <person name="Glass J.I."/>
            <person name="Winkler M.E."/>
        </authorList>
    </citation>
    <scope>NUCLEOTIDE SEQUENCE [LARGE SCALE GENOMIC DNA]</scope>
    <source>
        <strain>D39 / NCTC 7466</strain>
    </source>
</reference>
<sequence length="115" mass="13150">MNPLIQSLTEGQLRTDIPSFRPGDTVRVHAKVVEGNRERIQIFEGVVIARKGAGISENYTVRKISNGIGVERIFPIHTPRVEKIEVVRYGKVRRAKLYYLRALQGKAARIKEIRR</sequence>
<organism>
    <name type="scientific">Streptococcus pneumoniae serotype 2 (strain D39 / NCTC 7466)</name>
    <dbReference type="NCBI Taxonomy" id="373153"/>
    <lineage>
        <taxon>Bacteria</taxon>
        <taxon>Bacillati</taxon>
        <taxon>Bacillota</taxon>
        <taxon>Bacilli</taxon>
        <taxon>Lactobacillales</taxon>
        <taxon>Streptococcaceae</taxon>
        <taxon>Streptococcus</taxon>
    </lineage>
</organism>
<evidence type="ECO:0000255" key="1">
    <source>
        <dbReference type="HAMAP-Rule" id="MF_00402"/>
    </source>
</evidence>
<evidence type="ECO:0000305" key="2"/>
<comment type="function">
    <text evidence="1">This protein is located at the 30S-50S ribosomal subunit interface and may play a role in the structure and function of the aminoacyl-tRNA binding site.</text>
</comment>
<comment type="similarity">
    <text evidence="1">Belongs to the bacterial ribosomal protein bL19 family.</text>
</comment>
<feature type="chain" id="PRO_1000049752" description="Large ribosomal subunit protein bL19">
    <location>
        <begin position="1"/>
        <end position="115"/>
    </location>
</feature>
<dbReference type="EMBL" id="CP000410">
    <property type="protein sequence ID" value="ABJ54481.1"/>
    <property type="molecule type" value="Genomic_DNA"/>
</dbReference>
<dbReference type="RefSeq" id="WP_001068668.1">
    <property type="nucleotide sequence ID" value="NZ_JAMLJR010000006.1"/>
</dbReference>
<dbReference type="SMR" id="Q04K32"/>
<dbReference type="PaxDb" id="373153-SPD_1148"/>
<dbReference type="KEGG" id="spd:SPD_1148"/>
<dbReference type="eggNOG" id="COG0335">
    <property type="taxonomic scope" value="Bacteria"/>
</dbReference>
<dbReference type="HOGENOM" id="CLU_103507_2_1_9"/>
<dbReference type="BioCyc" id="SPNE373153:G1G6V-1240-MONOMER"/>
<dbReference type="Proteomes" id="UP000001452">
    <property type="component" value="Chromosome"/>
</dbReference>
<dbReference type="GO" id="GO:0022625">
    <property type="term" value="C:cytosolic large ribosomal subunit"/>
    <property type="evidence" value="ECO:0007669"/>
    <property type="project" value="TreeGrafter"/>
</dbReference>
<dbReference type="GO" id="GO:0003735">
    <property type="term" value="F:structural constituent of ribosome"/>
    <property type="evidence" value="ECO:0007669"/>
    <property type="project" value="InterPro"/>
</dbReference>
<dbReference type="GO" id="GO:0006412">
    <property type="term" value="P:translation"/>
    <property type="evidence" value="ECO:0007669"/>
    <property type="project" value="UniProtKB-UniRule"/>
</dbReference>
<dbReference type="FunFam" id="2.30.30.790:FF:000001">
    <property type="entry name" value="50S ribosomal protein L19"/>
    <property type="match status" value="1"/>
</dbReference>
<dbReference type="Gene3D" id="2.30.30.790">
    <property type="match status" value="1"/>
</dbReference>
<dbReference type="HAMAP" id="MF_00402">
    <property type="entry name" value="Ribosomal_bL19"/>
    <property type="match status" value="1"/>
</dbReference>
<dbReference type="InterPro" id="IPR001857">
    <property type="entry name" value="Ribosomal_bL19"/>
</dbReference>
<dbReference type="InterPro" id="IPR018257">
    <property type="entry name" value="Ribosomal_bL19_CS"/>
</dbReference>
<dbReference type="InterPro" id="IPR038657">
    <property type="entry name" value="Ribosomal_bL19_sf"/>
</dbReference>
<dbReference type="InterPro" id="IPR008991">
    <property type="entry name" value="Translation_prot_SH3-like_sf"/>
</dbReference>
<dbReference type="NCBIfam" id="TIGR01024">
    <property type="entry name" value="rplS_bact"/>
    <property type="match status" value="1"/>
</dbReference>
<dbReference type="PANTHER" id="PTHR15680:SF9">
    <property type="entry name" value="LARGE RIBOSOMAL SUBUNIT PROTEIN BL19M"/>
    <property type="match status" value="1"/>
</dbReference>
<dbReference type="PANTHER" id="PTHR15680">
    <property type="entry name" value="RIBOSOMAL PROTEIN L19"/>
    <property type="match status" value="1"/>
</dbReference>
<dbReference type="Pfam" id="PF01245">
    <property type="entry name" value="Ribosomal_L19"/>
    <property type="match status" value="1"/>
</dbReference>
<dbReference type="PIRSF" id="PIRSF002191">
    <property type="entry name" value="Ribosomal_L19"/>
    <property type="match status" value="1"/>
</dbReference>
<dbReference type="PRINTS" id="PR00061">
    <property type="entry name" value="RIBOSOMALL19"/>
</dbReference>
<dbReference type="SUPFAM" id="SSF50104">
    <property type="entry name" value="Translation proteins SH3-like domain"/>
    <property type="match status" value="1"/>
</dbReference>
<dbReference type="PROSITE" id="PS01015">
    <property type="entry name" value="RIBOSOMAL_L19"/>
    <property type="match status" value="1"/>
</dbReference>
<keyword id="KW-1185">Reference proteome</keyword>
<keyword id="KW-0687">Ribonucleoprotein</keyword>
<keyword id="KW-0689">Ribosomal protein</keyword>
<name>RL19_STRP2</name>
<gene>
    <name evidence="1" type="primary">rplS</name>
    <name type="ordered locus">SPD_1148</name>
</gene>
<accession>Q04K32</accession>
<proteinExistence type="inferred from homology"/>